<accession>Q9XPI8</accession>
<geneLocation type="mitochondrion"/>
<organism>
    <name type="scientific">Dictyostelium discoideum</name>
    <name type="common">Social amoeba</name>
    <dbReference type="NCBI Taxonomy" id="44689"/>
    <lineage>
        <taxon>Eukaryota</taxon>
        <taxon>Amoebozoa</taxon>
        <taxon>Evosea</taxon>
        <taxon>Eumycetozoa</taxon>
        <taxon>Dictyostelia</taxon>
        <taxon>Dictyosteliales</taxon>
        <taxon>Dictyosteliaceae</taxon>
        <taxon>Dictyostelium</taxon>
    </lineage>
</organism>
<evidence type="ECO:0000255" key="1">
    <source>
        <dbReference type="PROSITE-ProRule" id="PRU00182"/>
    </source>
</evidence>
<evidence type="ECO:0000305" key="2"/>
<comment type="subcellular location">
    <subcellularLocation>
        <location>Mitochondrion</location>
    </subcellularLocation>
</comment>
<comment type="similarity">
    <text evidence="2">Belongs to the universal ribosomal protein uS4 family.</text>
</comment>
<sequence>MRQRKNVTKFIKRAYRDMGELKQYKRYTKTRLNIISNKVFLLKNELYPLQPKKKRGKRDQQLKTTYTKKKLKRILSLLFRIGGKIYRKKIKKKKINLKKQQEPFTQNLTLHRLFRKFYLNLKLKQFKLLYKKYKGNEKVIIQQLEKRVDMVLLRSGFVRSLYEARQIINHKHLLVNGKIASLPGYMINVGDIISFKEGSMKRKLLKRLKKGLISKKSRKRWTNRNFKFKRFQNYKRKRQKKKNKNKVRATGPNYLEISHSLLLISLIEEPKLTAIKYPFTLQPEKNIKFITLLKKYKRLR</sequence>
<protein>
    <recommendedName>
        <fullName evidence="2">Small ribosomal subunit protein uS4m</fullName>
    </recommendedName>
    <alternativeName>
        <fullName>Ribosomal protein S4, mitochondrial</fullName>
    </alternativeName>
</protein>
<proteinExistence type="inferred from homology"/>
<gene>
    <name type="primary">mrps4</name>
    <name type="synonym">dia3</name>
    <name type="synonym">rps4</name>
    <name type="ORF">DDB_G0294046</name>
</gene>
<name>RT04_DICDI</name>
<reference key="1">
    <citation type="journal article" date="2000" name="Mol. Gen. Genet.">
        <title>The mitochondrial DNA of Dictyostelium discoideum: complete sequence, gene content and genome organization.</title>
        <authorList>
            <person name="Ogawa S."/>
            <person name="Yoshino R."/>
            <person name="Angata K."/>
            <person name="Iwamoto M."/>
            <person name="Pi M."/>
            <person name="Kuroe K."/>
            <person name="Matsuo K."/>
            <person name="Morio T."/>
            <person name="Urushihara H."/>
            <person name="Yanagisawa K."/>
            <person name="Tanaka Y."/>
        </authorList>
    </citation>
    <scope>NUCLEOTIDE SEQUENCE [LARGE SCALE GENOMIC DNA]</scope>
    <source>
        <strain>AX3</strain>
    </source>
</reference>
<dbReference type="EMBL" id="AB000109">
    <property type="protein sequence ID" value="BAA78088.1"/>
    <property type="molecule type" value="Genomic_DNA"/>
</dbReference>
<dbReference type="PIR" id="T43785">
    <property type="entry name" value="T43785"/>
</dbReference>
<dbReference type="RefSeq" id="NP_050106.1">
    <property type="nucleotide sequence ID" value="NC_000895.1"/>
</dbReference>
<dbReference type="SMR" id="Q9XPI8"/>
<dbReference type="FunCoup" id="Q9XPI8">
    <property type="interactions" value="101"/>
</dbReference>
<dbReference type="STRING" id="44689.Q9XPI8"/>
<dbReference type="GeneID" id="2193932"/>
<dbReference type="KEGG" id="ddi:DidioMp39"/>
<dbReference type="dictyBase" id="DDB_G0294046">
    <property type="gene designation" value="mrps4"/>
</dbReference>
<dbReference type="VEuPathDB" id="AmoebaDB:DidioMp39"/>
<dbReference type="InParanoid" id="Q9XPI8"/>
<dbReference type="PRO" id="PR:Q9XPI8"/>
<dbReference type="Proteomes" id="UP000002195">
    <property type="component" value="Mitochondrion"/>
</dbReference>
<dbReference type="GO" id="GO:0005737">
    <property type="term" value="C:cytoplasm"/>
    <property type="evidence" value="ECO:0000314"/>
    <property type="project" value="dictyBase"/>
</dbReference>
<dbReference type="GO" id="GO:0005763">
    <property type="term" value="C:mitochondrial small ribosomal subunit"/>
    <property type="evidence" value="ECO:0000250"/>
    <property type="project" value="dictyBase"/>
</dbReference>
<dbReference type="GO" id="GO:0015935">
    <property type="term" value="C:small ribosomal subunit"/>
    <property type="evidence" value="ECO:0000318"/>
    <property type="project" value="GO_Central"/>
</dbReference>
<dbReference type="GO" id="GO:0019843">
    <property type="term" value="F:rRNA binding"/>
    <property type="evidence" value="ECO:0000318"/>
    <property type="project" value="GO_Central"/>
</dbReference>
<dbReference type="GO" id="GO:0003735">
    <property type="term" value="F:structural constituent of ribosome"/>
    <property type="evidence" value="ECO:0000318"/>
    <property type="project" value="GO_Central"/>
</dbReference>
<dbReference type="GO" id="GO:0031152">
    <property type="term" value="P:aggregation involved in sorocarp development"/>
    <property type="evidence" value="ECO:0000315"/>
    <property type="project" value="dictyBase"/>
</dbReference>
<dbReference type="GO" id="GO:0042981">
    <property type="term" value="P:regulation of apoptotic process"/>
    <property type="evidence" value="ECO:0000315"/>
    <property type="project" value="dictyBase"/>
</dbReference>
<dbReference type="GO" id="GO:0051726">
    <property type="term" value="P:regulation of cell cycle"/>
    <property type="evidence" value="ECO:0000315"/>
    <property type="project" value="dictyBase"/>
</dbReference>
<dbReference type="GO" id="GO:0042274">
    <property type="term" value="P:ribosomal small subunit biogenesis"/>
    <property type="evidence" value="ECO:0000318"/>
    <property type="project" value="GO_Central"/>
</dbReference>
<dbReference type="CDD" id="cd00165">
    <property type="entry name" value="S4"/>
    <property type="match status" value="1"/>
</dbReference>
<dbReference type="Gene3D" id="1.10.1050.10">
    <property type="entry name" value="Ribosomal Protein S4 Delta 41, Chain A, domain 1"/>
    <property type="match status" value="1"/>
</dbReference>
<dbReference type="Gene3D" id="3.10.290.10">
    <property type="entry name" value="RNA-binding S4 domain"/>
    <property type="match status" value="1"/>
</dbReference>
<dbReference type="InterPro" id="IPR022801">
    <property type="entry name" value="Ribosomal_uS4"/>
</dbReference>
<dbReference type="InterPro" id="IPR002942">
    <property type="entry name" value="S4_RNA-bd"/>
</dbReference>
<dbReference type="InterPro" id="IPR036986">
    <property type="entry name" value="S4_RNA-bd_sf"/>
</dbReference>
<dbReference type="PANTHER" id="PTHR11831">
    <property type="entry name" value="30S 40S RIBOSOMAL PROTEIN"/>
    <property type="match status" value="1"/>
</dbReference>
<dbReference type="PANTHER" id="PTHR11831:SF4">
    <property type="entry name" value="SMALL RIBOSOMAL SUBUNIT PROTEIN US4M"/>
    <property type="match status" value="1"/>
</dbReference>
<dbReference type="Pfam" id="PF01479">
    <property type="entry name" value="S4"/>
    <property type="match status" value="1"/>
</dbReference>
<dbReference type="SMART" id="SM00363">
    <property type="entry name" value="S4"/>
    <property type="match status" value="1"/>
</dbReference>
<dbReference type="SUPFAM" id="SSF55174">
    <property type="entry name" value="Alpha-L RNA-binding motif"/>
    <property type="match status" value="1"/>
</dbReference>
<dbReference type="PROSITE" id="PS50889">
    <property type="entry name" value="S4"/>
    <property type="match status" value="1"/>
</dbReference>
<feature type="chain" id="PRO_0000311823" description="Small ribosomal subunit protein uS4m">
    <location>
        <begin position="1"/>
        <end position="300"/>
    </location>
</feature>
<feature type="domain" description="S4 RNA-binding" evidence="1">
    <location>
        <begin position="146"/>
        <end position="209"/>
    </location>
</feature>
<keyword id="KW-0496">Mitochondrion</keyword>
<keyword id="KW-1185">Reference proteome</keyword>
<keyword id="KW-0687">Ribonucleoprotein</keyword>
<keyword id="KW-0689">Ribosomal protein</keyword>
<keyword id="KW-0694">RNA-binding</keyword>
<keyword id="KW-0699">rRNA-binding</keyword>